<comment type="function">
    <text evidence="1">Involved both in the piRNA and miRNA metabolic processes. As a component of the meiotic nuage, plays a central role during oogenesis by repressing transposable elements and preventing their mobilization, which is essential for the germline integrity. Repression of transposable elements is mediated via the piRNA metabolic process, which mediates the repression of transposable elements during meiosis by forming complexes composed of piRNAs and Piwi proteins and governs the repression of transposons. As a nuclear component, it is required for proper differentiation in the germline stem cell (GSC) lineage by repressing microRNA-7 (miR-7), thereby acting as an indirect regulator of bag-of-marbles (Bam). Acts by binding to the promoter of miR-7 gene and repressing its expression; miR-7 repression alleviates the Bam repression by miR-7, thereby allowing differentiation in the germline stem cell (GSC) lineage (By similarity).</text>
</comment>
<comment type="subcellular location">
    <subcellularLocation>
        <location>Cytoplasm</location>
    </subcellularLocation>
    <subcellularLocation>
        <location>Nucleus</location>
    </subcellularLocation>
    <text evidence="1">Component of the meiotic nuage, also named P granule, a germ-cell-specific organelle required to repress transposon activity during meiosis.</text>
</comment>
<comment type="similarity">
    <text evidence="2">Belongs to the maelstrom family.</text>
</comment>
<feature type="chain" id="PRO_0000367303" description="Protein maelstrom 1">
    <location>
        <begin position="1"/>
        <end position="371"/>
    </location>
</feature>
<feature type="DNA-binding region" description="HMG box">
    <location>
        <begin position="2"/>
        <end position="68"/>
    </location>
</feature>
<evidence type="ECO:0000250" key="1"/>
<evidence type="ECO:0000305" key="2"/>
<organism>
    <name type="scientific">Drosophila pseudoobscura pseudoobscura</name>
    <name type="common">Fruit fly</name>
    <dbReference type="NCBI Taxonomy" id="46245"/>
    <lineage>
        <taxon>Eukaryota</taxon>
        <taxon>Metazoa</taxon>
        <taxon>Ecdysozoa</taxon>
        <taxon>Arthropoda</taxon>
        <taxon>Hexapoda</taxon>
        <taxon>Insecta</taxon>
        <taxon>Pterygota</taxon>
        <taxon>Neoptera</taxon>
        <taxon>Endopterygota</taxon>
        <taxon>Diptera</taxon>
        <taxon>Brachycera</taxon>
        <taxon>Muscomorpha</taxon>
        <taxon>Ephydroidea</taxon>
        <taxon>Drosophilidae</taxon>
        <taxon>Drosophila</taxon>
        <taxon>Sophophora</taxon>
    </lineage>
</organism>
<protein>
    <recommendedName>
        <fullName>Protein maelstrom 1</fullName>
    </recommendedName>
</protein>
<name>MAEL1_DROPS</name>
<dbReference type="EMBL" id="CH379070">
    <property type="protein sequence ID" value="EDY73922.1"/>
    <property type="molecule type" value="Genomic_DNA"/>
</dbReference>
<dbReference type="RefSeq" id="XP_002135295.1">
    <property type="nucleotide sequence ID" value="XM_002135259.2"/>
</dbReference>
<dbReference type="RefSeq" id="XP_015043537.1">
    <property type="nucleotide sequence ID" value="XM_015188051.1"/>
</dbReference>
<dbReference type="SMR" id="B5DR03"/>
<dbReference type="FunCoup" id="B5DR03">
    <property type="interactions" value="58"/>
</dbReference>
<dbReference type="EnsemblMetazoa" id="FBtr0288194">
    <property type="protein sequence ID" value="FBpp0286632"/>
    <property type="gene ID" value="FBgn0249827"/>
</dbReference>
<dbReference type="EnsemblMetazoa" id="FBtr0374140">
    <property type="protein sequence ID" value="FBpp0335782"/>
    <property type="gene ID" value="FBgn0249827"/>
</dbReference>
<dbReference type="KEGG" id="dpo:6899927"/>
<dbReference type="CTD" id="84944"/>
<dbReference type="eggNOG" id="ENOG502QTQB">
    <property type="taxonomic scope" value="Eukaryota"/>
</dbReference>
<dbReference type="HOGENOM" id="CLU_044134_0_0_1"/>
<dbReference type="InParanoid" id="B5DR03"/>
<dbReference type="OMA" id="PAENIGM"/>
<dbReference type="Proteomes" id="UP000001819">
    <property type="component" value="Chromosome X"/>
</dbReference>
<dbReference type="Bgee" id="FBgn0249827">
    <property type="expression patterns" value="Expressed in female reproductive system and 2 other cell types or tissues"/>
</dbReference>
<dbReference type="ExpressionAtlas" id="B5DR03">
    <property type="expression patterns" value="baseline"/>
</dbReference>
<dbReference type="GO" id="GO:0005737">
    <property type="term" value="C:cytoplasm"/>
    <property type="evidence" value="ECO:0000250"/>
    <property type="project" value="UniProtKB"/>
</dbReference>
<dbReference type="GO" id="GO:0005634">
    <property type="term" value="C:nucleus"/>
    <property type="evidence" value="ECO:0000250"/>
    <property type="project" value="UniProtKB"/>
</dbReference>
<dbReference type="GO" id="GO:0043186">
    <property type="term" value="C:P granule"/>
    <property type="evidence" value="ECO:0000250"/>
    <property type="project" value="UniProtKB"/>
</dbReference>
<dbReference type="GO" id="GO:0048471">
    <property type="term" value="C:perinuclear region of cytoplasm"/>
    <property type="evidence" value="ECO:0000250"/>
    <property type="project" value="UniProtKB"/>
</dbReference>
<dbReference type="GO" id="GO:0000976">
    <property type="term" value="F:transcription cis-regulatory region binding"/>
    <property type="evidence" value="ECO:0000250"/>
    <property type="project" value="UniProtKB"/>
</dbReference>
<dbReference type="GO" id="GO:0030718">
    <property type="term" value="P:germ-line stem cell population maintenance"/>
    <property type="evidence" value="ECO:0000250"/>
    <property type="project" value="UniProtKB"/>
</dbReference>
<dbReference type="GO" id="GO:0007140">
    <property type="term" value="P:male meiotic nuclear division"/>
    <property type="evidence" value="ECO:0007669"/>
    <property type="project" value="TreeGrafter"/>
</dbReference>
<dbReference type="GO" id="GO:0045892">
    <property type="term" value="P:negative regulation of DNA-templated transcription"/>
    <property type="evidence" value="ECO:0000250"/>
    <property type="project" value="UniProtKB"/>
</dbReference>
<dbReference type="GO" id="GO:0048477">
    <property type="term" value="P:oogenesis"/>
    <property type="evidence" value="ECO:0007669"/>
    <property type="project" value="UniProtKB-KW"/>
</dbReference>
<dbReference type="GO" id="GO:0034587">
    <property type="term" value="P:piRNA processing"/>
    <property type="evidence" value="ECO:0000250"/>
    <property type="project" value="UniProtKB"/>
</dbReference>
<dbReference type="GO" id="GO:0060964">
    <property type="term" value="P:regulation of miRNA-mediated gene silencing"/>
    <property type="evidence" value="ECO:0007669"/>
    <property type="project" value="InterPro"/>
</dbReference>
<dbReference type="GO" id="GO:0031047">
    <property type="term" value="P:regulatory ncRNA-mediated gene silencing"/>
    <property type="evidence" value="ECO:0000250"/>
    <property type="project" value="UniProtKB"/>
</dbReference>
<dbReference type="GO" id="GO:0007283">
    <property type="term" value="P:spermatogenesis"/>
    <property type="evidence" value="ECO:0000250"/>
    <property type="project" value="UniProtKB"/>
</dbReference>
<dbReference type="FunFam" id="1.10.30.10:FF:000057">
    <property type="entry name" value="Protein maelstrom 2"/>
    <property type="match status" value="1"/>
</dbReference>
<dbReference type="Gene3D" id="1.10.30.10">
    <property type="entry name" value="High mobility group box domain"/>
    <property type="match status" value="1"/>
</dbReference>
<dbReference type="InterPro" id="IPR036910">
    <property type="entry name" value="HMG_box_dom_sf"/>
</dbReference>
<dbReference type="InterPro" id="IPR024970">
    <property type="entry name" value="Maelstrom"/>
</dbReference>
<dbReference type="InterPro" id="IPR039259">
    <property type="entry name" value="Protein_maelstrom"/>
</dbReference>
<dbReference type="PANTHER" id="PTHR21358">
    <property type="entry name" value="PROTEIN MAELSTROM HOMOLOG"/>
    <property type="match status" value="1"/>
</dbReference>
<dbReference type="PANTHER" id="PTHR21358:SF4">
    <property type="entry name" value="PROTEIN MAELSTROM HOMOLOG"/>
    <property type="match status" value="1"/>
</dbReference>
<dbReference type="Pfam" id="PF13017">
    <property type="entry name" value="Maelstrom"/>
    <property type="match status" value="1"/>
</dbReference>
<dbReference type="SUPFAM" id="SSF47095">
    <property type="entry name" value="HMG-box"/>
    <property type="match status" value="1"/>
</dbReference>
<sequence length="371" mass="41931">MAQNKPNAFMAFVADWRACNRFGRGLSTSEAVAKCGPIWEGMSDRERGPYKSKAKDSNVLERESKTERLNCPGVAFSKMQVEKNEAIDAELQMKRNIKRIVLKATNSMKLEEEEFLFVSFNYFTKALNGDVYQPAELSACRFSLKGGISSNYSTMINPGHIIFGQTSDAQDHSRTTHKLPLPPNAMGEKNLGNLYSDTLKWLSASNDEEDEQYDHPVIVYTTPELMPVVKSCFRYLACEGDTDKHAKKIIVYDICYLFLTLKKTVLDLVGVPSDHMNIHVTNSFFRRDFFEFSSGIACDYHEEVDRTKYCTKSMVLRWGYMISHYICGDLAIPLQPRKHVPIEVKHSYTVTPGDSSLALDGTSTDSGYSGY</sequence>
<gene>
    <name type="primary">mael1</name>
    <name type="ORF">GA28467</name>
</gene>
<keyword id="KW-0963">Cytoplasm</keyword>
<keyword id="KW-0217">Developmental protein</keyword>
<keyword id="KW-0221">Differentiation</keyword>
<keyword id="KW-0238">DNA-binding</keyword>
<keyword id="KW-0469">Meiosis</keyword>
<keyword id="KW-0539">Nucleus</keyword>
<keyword id="KW-0896">Oogenesis</keyword>
<keyword id="KW-1185">Reference proteome</keyword>
<keyword id="KW-0678">Repressor</keyword>
<keyword id="KW-0943">RNA-mediated gene silencing</keyword>
<keyword id="KW-0804">Transcription</keyword>
<keyword id="KW-0805">Transcription regulation</keyword>
<accession>B5DR03</accession>
<proteinExistence type="inferred from homology"/>
<reference key="1">
    <citation type="journal article" date="2005" name="Genome Res.">
        <title>Comparative genome sequencing of Drosophila pseudoobscura: chromosomal, gene, and cis-element evolution.</title>
        <authorList>
            <person name="Richards S."/>
            <person name="Liu Y."/>
            <person name="Bettencourt B.R."/>
            <person name="Hradecky P."/>
            <person name="Letovsky S."/>
            <person name="Nielsen R."/>
            <person name="Thornton K."/>
            <person name="Hubisz M.J."/>
            <person name="Chen R."/>
            <person name="Meisel R.P."/>
            <person name="Couronne O."/>
            <person name="Hua S."/>
            <person name="Smith M.A."/>
            <person name="Zhang P."/>
            <person name="Liu J."/>
            <person name="Bussemaker H.J."/>
            <person name="van Batenburg M.F."/>
            <person name="Howells S.L."/>
            <person name="Scherer S.E."/>
            <person name="Sodergren E."/>
            <person name="Matthews B.B."/>
            <person name="Crosby M.A."/>
            <person name="Schroeder A.J."/>
            <person name="Ortiz-Barrientos D."/>
            <person name="Rives C.M."/>
            <person name="Metzker M.L."/>
            <person name="Muzny D.M."/>
            <person name="Scott G."/>
            <person name="Steffen D."/>
            <person name="Wheeler D.A."/>
            <person name="Worley K.C."/>
            <person name="Havlak P."/>
            <person name="Durbin K.J."/>
            <person name="Egan A."/>
            <person name="Gill R."/>
            <person name="Hume J."/>
            <person name="Morgan M.B."/>
            <person name="Miner G."/>
            <person name="Hamilton C."/>
            <person name="Huang Y."/>
            <person name="Waldron L."/>
            <person name="Verduzco D."/>
            <person name="Clerc-Blankenburg K.P."/>
            <person name="Dubchak I."/>
            <person name="Noor M.A.F."/>
            <person name="Anderson W."/>
            <person name="White K.P."/>
            <person name="Clark A.G."/>
            <person name="Schaeffer S.W."/>
            <person name="Gelbart W.M."/>
            <person name="Weinstock G.M."/>
            <person name="Gibbs R.A."/>
        </authorList>
    </citation>
    <scope>NUCLEOTIDE SEQUENCE [LARGE SCALE GENOMIC DNA]</scope>
    <source>
        <strain>MV2-25 / Tucson 14011-0121.94</strain>
    </source>
</reference>